<name>CCSA_HORVU</name>
<gene>
    <name evidence="1" type="primary">ccsA</name>
</gene>
<evidence type="ECO:0000255" key="1">
    <source>
        <dbReference type="HAMAP-Rule" id="MF_01391"/>
    </source>
</evidence>
<geneLocation type="chloroplast"/>
<reference key="1">
    <citation type="journal article" date="2007" name="Theor. Appl. Genet.">
        <title>Complete chloroplast genome sequences of Hordeum vulgare, Sorghum bicolor and Agrostis stolonifera, and comparative analyses with other grass genomes.</title>
        <authorList>
            <person name="Saski C."/>
            <person name="Lee S.-B."/>
            <person name="Fjellheim S."/>
            <person name="Guda C."/>
            <person name="Jansen R.K."/>
            <person name="Luo H."/>
            <person name="Tomkins J."/>
            <person name="Rognli O.A."/>
            <person name="Daniell H."/>
            <person name="Clarke J.L."/>
        </authorList>
    </citation>
    <scope>NUCLEOTIDE SEQUENCE [LARGE SCALE GENOMIC DNA]</scope>
    <source>
        <strain>cv. Morex</strain>
    </source>
</reference>
<proteinExistence type="inferred from homology"/>
<accession>A1E9N9</accession>
<feature type="chain" id="PRO_0000353758" description="Cytochrome c biogenesis protein CcsA">
    <location>
        <begin position="1"/>
        <end position="322"/>
    </location>
</feature>
<feature type="transmembrane region" description="Helical" evidence="1">
    <location>
        <begin position="9"/>
        <end position="29"/>
    </location>
</feature>
<feature type="transmembrane region" description="Helical" evidence="1">
    <location>
        <begin position="44"/>
        <end position="64"/>
    </location>
</feature>
<feature type="transmembrane region" description="Helical" evidence="1">
    <location>
        <begin position="68"/>
        <end position="88"/>
    </location>
</feature>
<feature type="transmembrane region" description="Helical" evidence="1">
    <location>
        <begin position="143"/>
        <end position="163"/>
    </location>
</feature>
<feature type="transmembrane region" description="Helical" evidence="1">
    <location>
        <begin position="226"/>
        <end position="246"/>
    </location>
</feature>
<feature type="transmembrane region" description="Helical" evidence="1">
    <location>
        <begin position="260"/>
        <end position="274"/>
    </location>
</feature>
<feature type="transmembrane region" description="Helical" evidence="1">
    <location>
        <begin position="289"/>
        <end position="309"/>
    </location>
</feature>
<comment type="function">
    <text evidence="1">Required during biogenesis of c-type cytochromes (cytochrome c6 and cytochrome f) at the step of heme attachment.</text>
</comment>
<comment type="subunit">
    <text evidence="1">May interact with Ccs1.</text>
</comment>
<comment type="subcellular location">
    <subcellularLocation>
        <location evidence="1">Plastid</location>
        <location evidence="1">Chloroplast thylakoid membrane</location>
        <topology evidence="1">Multi-pass membrane protein</topology>
    </subcellularLocation>
</comment>
<comment type="similarity">
    <text evidence="1">Belongs to the CcmF/CycK/Ccl1/NrfE/CcsA family.</text>
</comment>
<organism>
    <name type="scientific">Hordeum vulgare</name>
    <name type="common">Barley</name>
    <dbReference type="NCBI Taxonomy" id="4513"/>
    <lineage>
        <taxon>Eukaryota</taxon>
        <taxon>Viridiplantae</taxon>
        <taxon>Streptophyta</taxon>
        <taxon>Embryophyta</taxon>
        <taxon>Tracheophyta</taxon>
        <taxon>Spermatophyta</taxon>
        <taxon>Magnoliopsida</taxon>
        <taxon>Liliopsida</taxon>
        <taxon>Poales</taxon>
        <taxon>Poaceae</taxon>
        <taxon>BOP clade</taxon>
        <taxon>Pooideae</taxon>
        <taxon>Triticodae</taxon>
        <taxon>Triticeae</taxon>
        <taxon>Hordeinae</taxon>
        <taxon>Hordeum</taxon>
    </lineage>
</organism>
<dbReference type="EMBL" id="EF115541">
    <property type="protein sequence ID" value="ABK79461.1"/>
    <property type="molecule type" value="Genomic_DNA"/>
</dbReference>
<dbReference type="RefSeq" id="YP_010144474.1">
    <property type="nucleotide sequence ID" value="NC_056985.1"/>
</dbReference>
<dbReference type="RefSeq" id="YP_874701.1">
    <property type="nucleotide sequence ID" value="NC_008590.1"/>
</dbReference>
<dbReference type="SMR" id="A1E9N9"/>
<dbReference type="GeneID" id="4525166"/>
<dbReference type="GeneID" id="67140721"/>
<dbReference type="OMA" id="HIDIITH"/>
<dbReference type="GO" id="GO:0009535">
    <property type="term" value="C:chloroplast thylakoid membrane"/>
    <property type="evidence" value="ECO:0007669"/>
    <property type="project" value="UniProtKB-SubCell"/>
</dbReference>
<dbReference type="GO" id="GO:0005886">
    <property type="term" value="C:plasma membrane"/>
    <property type="evidence" value="ECO:0007669"/>
    <property type="project" value="TreeGrafter"/>
</dbReference>
<dbReference type="GO" id="GO:0020037">
    <property type="term" value="F:heme binding"/>
    <property type="evidence" value="ECO:0007669"/>
    <property type="project" value="InterPro"/>
</dbReference>
<dbReference type="GO" id="GO:0017004">
    <property type="term" value="P:cytochrome complex assembly"/>
    <property type="evidence" value="ECO:0007669"/>
    <property type="project" value="UniProtKB-UniRule"/>
</dbReference>
<dbReference type="HAMAP" id="MF_01391">
    <property type="entry name" value="CytC_CcsA"/>
    <property type="match status" value="1"/>
</dbReference>
<dbReference type="InterPro" id="IPR002541">
    <property type="entry name" value="Cyt_c_assembly"/>
</dbReference>
<dbReference type="InterPro" id="IPR017562">
    <property type="entry name" value="Cyt_c_biogenesis_CcsA"/>
</dbReference>
<dbReference type="InterPro" id="IPR045062">
    <property type="entry name" value="Cyt_c_biogenesis_CcsA/CcmC"/>
</dbReference>
<dbReference type="NCBIfam" id="TIGR03144">
    <property type="entry name" value="cytochr_II_ccsB"/>
    <property type="match status" value="1"/>
</dbReference>
<dbReference type="PANTHER" id="PTHR30071:SF1">
    <property type="entry name" value="CYTOCHROME B_B6 PROTEIN-RELATED"/>
    <property type="match status" value="1"/>
</dbReference>
<dbReference type="PANTHER" id="PTHR30071">
    <property type="entry name" value="HEME EXPORTER PROTEIN C"/>
    <property type="match status" value="1"/>
</dbReference>
<dbReference type="Pfam" id="PF01578">
    <property type="entry name" value="Cytochrom_C_asm"/>
    <property type="match status" value="1"/>
</dbReference>
<keyword id="KW-0150">Chloroplast</keyword>
<keyword id="KW-0201">Cytochrome c-type biogenesis</keyword>
<keyword id="KW-0472">Membrane</keyword>
<keyword id="KW-0934">Plastid</keyword>
<keyword id="KW-0793">Thylakoid</keyword>
<keyword id="KW-0812">Transmembrane</keyword>
<keyword id="KW-1133">Transmembrane helix</keyword>
<sequence length="322" mass="36691">MLFATLEHILTHISFSTISIVITIHLITLLVRELGRLRDSSEKGMIVTFFSITGFLVSRWVSSGHFPLSNLYESLIFLSWALYILHTIPKIQNSKNDLSTITTPSTILTQGFATSGLLTEMHQSTILVPALQSQWLMMHVSMMLLSYATLLCGSLLSAAILIIRFRNNFHFFSKKKKNVLNKTFFFSEIAFFYAKRSALKSAPVPSFPNYYKYQLTERLDSWSYRIISLGFTLLTIGILCGAVWANEAWGSYWNWDPKETWAFITWTIFAIYLHSRTNPNWKGTNSALIASIGFLIIWICYFGINLLGIGLHSYGSFTLTPK</sequence>
<protein>
    <recommendedName>
        <fullName evidence="1">Cytochrome c biogenesis protein CcsA</fullName>
    </recommendedName>
</protein>